<reference key="1">
    <citation type="submission" date="1999-10" db="EMBL/GenBank/DDBJ databases">
        <title>Ion channels in cornea endothelium.</title>
        <authorList>
            <person name="Rae J.L."/>
        </authorList>
    </citation>
    <scope>NUCLEOTIDE SEQUENCE [MRNA] (ISOFORM 1)</scope>
    <source>
        <strain>New Zealand white</strain>
        <tissue>Corneal endothelium</tissue>
    </source>
</reference>
<reference key="2">
    <citation type="journal article" date="2002" name="J. Physiol. (Lond.)">
        <title>Molecular identification of Kv alpha subunits that contribute to the oxygen-sensitive K(+) current of chemoreceptor cells of the rabbit carotid body.</title>
        <authorList>
            <person name="Sanchez D."/>
            <person name="Lopez-Lopez J.R."/>
            <person name="Perez-Garcia M.T."/>
            <person name="Sanz-Alfayate G."/>
            <person name="Obeso A."/>
            <person name="Ganfornina M.D."/>
            <person name="Gonzalez C."/>
        </authorList>
    </citation>
    <scope>NUCLEOTIDE SEQUENCE [MRNA] OF 73-645 (ISOFORM 2)</scope>
    <scope>FUNCTION</scope>
    <scope>TRANSPORTER ACTIVITY</scope>
    <scope>TISSUE SPECIFICITY</scope>
</reference>
<protein>
    <recommendedName>
        <fullName evidence="5">A-type voltage-gated potassium channel KCND3</fullName>
    </recommendedName>
    <alternativeName>
        <fullName>Potassium voltage-gated channel subfamily D member 3</fullName>
    </alternativeName>
    <alternativeName>
        <fullName>Voltage-gated potassium channel subunit Kv4.3</fullName>
    </alternativeName>
</protein>
<evidence type="ECO:0000250" key="1">
    <source>
        <dbReference type="UniProtKB" id="P63142"/>
    </source>
</evidence>
<evidence type="ECO:0000250" key="2">
    <source>
        <dbReference type="UniProtKB" id="Q62897"/>
    </source>
</evidence>
<evidence type="ECO:0000250" key="3">
    <source>
        <dbReference type="UniProtKB" id="Q63881"/>
    </source>
</evidence>
<evidence type="ECO:0000250" key="4">
    <source>
        <dbReference type="UniProtKB" id="Q9NZV8"/>
    </source>
</evidence>
<evidence type="ECO:0000250" key="5">
    <source>
        <dbReference type="UniProtKB" id="Q9UK17"/>
    </source>
</evidence>
<evidence type="ECO:0000250" key="6">
    <source>
        <dbReference type="UniProtKB" id="Q9Z0V1"/>
    </source>
</evidence>
<evidence type="ECO:0000255" key="7"/>
<evidence type="ECO:0000256" key="8">
    <source>
        <dbReference type="SAM" id="MobiDB-lite"/>
    </source>
</evidence>
<evidence type="ECO:0000269" key="9">
    <source>
    </source>
</evidence>
<evidence type="ECO:0000303" key="10">
    <source>
    </source>
</evidence>
<evidence type="ECO:0000305" key="11"/>
<proteinExistence type="evidence at transcript level"/>
<organism>
    <name type="scientific">Oryctolagus cuniculus</name>
    <name type="common">Rabbit</name>
    <dbReference type="NCBI Taxonomy" id="9986"/>
    <lineage>
        <taxon>Eukaryota</taxon>
        <taxon>Metazoa</taxon>
        <taxon>Chordata</taxon>
        <taxon>Craniata</taxon>
        <taxon>Vertebrata</taxon>
        <taxon>Euteleostomi</taxon>
        <taxon>Mammalia</taxon>
        <taxon>Eutheria</taxon>
        <taxon>Euarchontoglires</taxon>
        <taxon>Glires</taxon>
        <taxon>Lagomorpha</taxon>
        <taxon>Leporidae</taxon>
        <taxon>Oryctolagus</taxon>
    </lineage>
</organism>
<dbReference type="EMBL" id="AF198445">
    <property type="protein sequence ID" value="AAF06021.1"/>
    <property type="molecule type" value="mRNA"/>
</dbReference>
<dbReference type="EMBL" id="AF493549">
    <property type="protein sequence ID" value="AAM46843.1"/>
    <property type="molecule type" value="mRNA"/>
</dbReference>
<dbReference type="RefSeq" id="NP_001076186.1">
    <molecule id="Q9TTT5-1"/>
    <property type="nucleotide sequence ID" value="NM_001082717.1"/>
</dbReference>
<dbReference type="SMR" id="Q9TTT5"/>
<dbReference type="FunCoup" id="Q9TTT5">
    <property type="interactions" value="149"/>
</dbReference>
<dbReference type="STRING" id="9986.ENSOCUP00000012275"/>
<dbReference type="PaxDb" id="9986-ENSOCUP00000012275"/>
<dbReference type="GeneID" id="100009472"/>
<dbReference type="KEGG" id="ocu:100009472"/>
<dbReference type="CTD" id="3752"/>
<dbReference type="eggNOG" id="KOG4390">
    <property type="taxonomic scope" value="Eukaryota"/>
</dbReference>
<dbReference type="InParanoid" id="Q9TTT5"/>
<dbReference type="OrthoDB" id="433309at2759"/>
<dbReference type="Proteomes" id="UP000001811">
    <property type="component" value="Unplaced"/>
</dbReference>
<dbReference type="GO" id="GO:0043197">
    <property type="term" value="C:dendritic spine"/>
    <property type="evidence" value="ECO:0007669"/>
    <property type="project" value="TreeGrafter"/>
</dbReference>
<dbReference type="GO" id="GO:0043025">
    <property type="term" value="C:neuronal cell body"/>
    <property type="evidence" value="ECO:0007669"/>
    <property type="project" value="TreeGrafter"/>
</dbReference>
<dbReference type="GO" id="GO:0045211">
    <property type="term" value="C:postsynaptic membrane"/>
    <property type="evidence" value="ECO:0007669"/>
    <property type="project" value="TreeGrafter"/>
</dbReference>
<dbReference type="GO" id="GO:0042383">
    <property type="term" value="C:sarcolemma"/>
    <property type="evidence" value="ECO:0007669"/>
    <property type="project" value="UniProtKB-SubCell"/>
</dbReference>
<dbReference type="GO" id="GO:0008076">
    <property type="term" value="C:voltage-gated potassium channel complex"/>
    <property type="evidence" value="ECO:0007669"/>
    <property type="project" value="InterPro"/>
</dbReference>
<dbReference type="GO" id="GO:0005250">
    <property type="term" value="F:A-type (transient outward) potassium channel activity"/>
    <property type="evidence" value="ECO:0000314"/>
    <property type="project" value="UniProtKB"/>
</dbReference>
<dbReference type="GO" id="GO:0046872">
    <property type="term" value="F:metal ion binding"/>
    <property type="evidence" value="ECO:0007669"/>
    <property type="project" value="UniProtKB-KW"/>
</dbReference>
<dbReference type="GO" id="GO:0001508">
    <property type="term" value="P:action potential"/>
    <property type="evidence" value="ECO:0007669"/>
    <property type="project" value="TreeGrafter"/>
</dbReference>
<dbReference type="GO" id="GO:0097623">
    <property type="term" value="P:potassium ion export across plasma membrane"/>
    <property type="evidence" value="ECO:0007669"/>
    <property type="project" value="TreeGrafter"/>
</dbReference>
<dbReference type="GO" id="GO:0006813">
    <property type="term" value="P:potassium ion transport"/>
    <property type="evidence" value="ECO:0000314"/>
    <property type="project" value="UniProtKB"/>
</dbReference>
<dbReference type="GO" id="GO:0051260">
    <property type="term" value="P:protein homooligomerization"/>
    <property type="evidence" value="ECO:0007669"/>
    <property type="project" value="InterPro"/>
</dbReference>
<dbReference type="CDD" id="cd18419">
    <property type="entry name" value="BTB_POZ_KCND3"/>
    <property type="match status" value="1"/>
</dbReference>
<dbReference type="FunFam" id="1.10.287.70:FF:000073">
    <property type="entry name" value="Potassium voltage-gated channel subfamily D member 2"/>
    <property type="match status" value="1"/>
</dbReference>
<dbReference type="FunFam" id="1.10.287.70:FF:000111">
    <property type="entry name" value="Potassium voltage-gated channel subfamily D member 3"/>
    <property type="match status" value="1"/>
</dbReference>
<dbReference type="FunFam" id="1.20.120.350:FF:000016">
    <property type="entry name" value="Potassium voltage-gated channel subfamily D member 3"/>
    <property type="match status" value="1"/>
</dbReference>
<dbReference type="FunFam" id="3.30.710.10:FF:000004">
    <property type="entry name" value="Potassium voltage-gated channel subfamily D member 3"/>
    <property type="match status" value="1"/>
</dbReference>
<dbReference type="Gene3D" id="1.10.287.70">
    <property type="match status" value="1"/>
</dbReference>
<dbReference type="Gene3D" id="3.30.710.10">
    <property type="entry name" value="Potassium Channel Kv1.1, Chain A"/>
    <property type="match status" value="1"/>
</dbReference>
<dbReference type="Gene3D" id="1.20.120.350">
    <property type="entry name" value="Voltage-gated potassium channels. Chain C"/>
    <property type="match status" value="1"/>
</dbReference>
<dbReference type="InterPro" id="IPR000210">
    <property type="entry name" value="BTB/POZ_dom"/>
</dbReference>
<dbReference type="InterPro" id="IPR005821">
    <property type="entry name" value="Ion_trans_dom"/>
</dbReference>
<dbReference type="InterPro" id="IPR003968">
    <property type="entry name" value="K_chnl_volt-dep_Kv"/>
</dbReference>
<dbReference type="InterPro" id="IPR003975">
    <property type="entry name" value="K_chnl_volt-dep_Kv4"/>
</dbReference>
<dbReference type="InterPro" id="IPR004056">
    <property type="entry name" value="K_chnl_volt-dep_Kv4.3"/>
</dbReference>
<dbReference type="InterPro" id="IPR024587">
    <property type="entry name" value="K_chnl_volt-dep_Kv4_C"/>
</dbReference>
<dbReference type="InterPro" id="IPR021645">
    <property type="entry name" value="Shal-type_N"/>
</dbReference>
<dbReference type="InterPro" id="IPR011333">
    <property type="entry name" value="SKP1/BTB/POZ_sf"/>
</dbReference>
<dbReference type="InterPro" id="IPR003131">
    <property type="entry name" value="T1-type_BTB"/>
</dbReference>
<dbReference type="InterPro" id="IPR028325">
    <property type="entry name" value="VG_K_chnl"/>
</dbReference>
<dbReference type="InterPro" id="IPR027359">
    <property type="entry name" value="Volt_channel_dom_sf"/>
</dbReference>
<dbReference type="PANTHER" id="PTHR11537:SF182">
    <property type="entry name" value="POTASSIUM VOLTAGE-GATED CHANNEL SUBFAMILY D MEMBER 3"/>
    <property type="match status" value="1"/>
</dbReference>
<dbReference type="PANTHER" id="PTHR11537">
    <property type="entry name" value="VOLTAGE-GATED POTASSIUM CHANNEL"/>
    <property type="match status" value="1"/>
</dbReference>
<dbReference type="Pfam" id="PF02214">
    <property type="entry name" value="BTB_2"/>
    <property type="match status" value="1"/>
</dbReference>
<dbReference type="Pfam" id="PF11879">
    <property type="entry name" value="DUF3399"/>
    <property type="match status" value="1"/>
</dbReference>
<dbReference type="Pfam" id="PF00520">
    <property type="entry name" value="Ion_trans"/>
    <property type="match status" value="1"/>
</dbReference>
<dbReference type="Pfam" id="PF11601">
    <property type="entry name" value="Shal-type"/>
    <property type="match status" value="1"/>
</dbReference>
<dbReference type="PRINTS" id="PR00169">
    <property type="entry name" value="KCHANNEL"/>
</dbReference>
<dbReference type="PRINTS" id="PR01518">
    <property type="entry name" value="KV43CHANNEL"/>
</dbReference>
<dbReference type="PRINTS" id="PR01491">
    <property type="entry name" value="KVCHANNEL"/>
</dbReference>
<dbReference type="PRINTS" id="PR01497">
    <property type="entry name" value="SHALCHANNEL"/>
</dbReference>
<dbReference type="SMART" id="SM00225">
    <property type="entry name" value="BTB"/>
    <property type="match status" value="1"/>
</dbReference>
<dbReference type="SUPFAM" id="SSF54695">
    <property type="entry name" value="POZ domain"/>
    <property type="match status" value="1"/>
</dbReference>
<dbReference type="SUPFAM" id="SSF81324">
    <property type="entry name" value="Voltage-gated potassium channels"/>
    <property type="match status" value="1"/>
</dbReference>
<sequence length="655" mass="73380">MAAGVAAWLPFARAAAIGWMPVANCPMPLAPADKSKRQDELIVLNVSGRRFQTWRTTLERYPDTLLGSTEKEFFFNEDTKEYFFDRDPEVFRCVLNFYRTGKLHYPRYECISAYDDELAFYGILPEIIGDCCYEEYKDRKRENAERLMDDNDSENNQESMPSLSFRQTMWRAFENPHTSTLALVFYYVTGFFIAVSVITNVVETVPCGTVPGSKELPCGERYSVAFFCLDTACVMIFTVEYLLRLFAAPSRYRFIRSVMSIIDVVAIMPYYIGLVMTNNEDVSGAFVTLRVFRVFRIFKFSRHSQGLRILGYTLKSCASELGFLLFSLTMAIIIFATVMFYAEKGSSASKFTSIPASFWYTIVTMTTLGYGDMVPKTIAGKIFGSICSLSGVLVIALPVPVIVSNFSRIYHQNQRADKRRAQKKARLARIRVAKTGSSNAYLHSKRNGLLNEALELTGTPEEEHMGKTASLIESQHHHLLHCLEKTTGLSYLVDDPLLSVRTSTIKNHEFIDEQMFEQNCMESSMQNYPSTRSPSLSSHAGLTTTCCSRRSKKTTHLPNSNLPATRLRSMQELSTIHIQGSEQPSLTTSRSSLNLKADDGLRPNCKTSQITTAIISIPAPPALTPEGETRPPPASPGPNTNIPSIASNVVKVSVL</sequence>
<name>KCND3_RABIT</name>
<gene>
    <name evidence="5" type="primary">KCND3</name>
</gene>
<keyword id="KW-0025">Alternative splicing</keyword>
<keyword id="KW-1003">Cell membrane</keyword>
<keyword id="KW-0966">Cell projection</keyword>
<keyword id="KW-0407">Ion channel</keyword>
<keyword id="KW-0406">Ion transport</keyword>
<keyword id="KW-0472">Membrane</keyword>
<keyword id="KW-0479">Metal-binding</keyword>
<keyword id="KW-0597">Phosphoprotein</keyword>
<keyword id="KW-0630">Potassium</keyword>
<keyword id="KW-0631">Potassium channel</keyword>
<keyword id="KW-0633">Potassium transport</keyword>
<keyword id="KW-1185">Reference proteome</keyword>
<keyword id="KW-0812">Transmembrane</keyword>
<keyword id="KW-1133">Transmembrane helix</keyword>
<keyword id="KW-0813">Transport</keyword>
<keyword id="KW-0851">Voltage-gated channel</keyword>
<keyword id="KW-0862">Zinc</keyword>
<feature type="chain" id="PRO_0000054070" description="A-type voltage-gated potassium channel KCND3">
    <location>
        <begin position="1"/>
        <end position="655"/>
    </location>
</feature>
<feature type="topological domain" description="Cytoplasmic" evidence="5">
    <location>
        <begin position="1"/>
        <end position="182"/>
    </location>
</feature>
<feature type="transmembrane region" description="Helical; Name=Segment S1" evidence="5">
    <location>
        <begin position="183"/>
        <end position="204"/>
    </location>
</feature>
<feature type="topological domain" description="Extracellular" evidence="5">
    <location>
        <begin position="205"/>
        <end position="223"/>
    </location>
</feature>
<feature type="transmembrane region" description="Helical; Name=Segment S2" evidence="5">
    <location>
        <begin position="224"/>
        <end position="246"/>
    </location>
</feature>
<feature type="topological domain" description="Cytoplasmic" evidence="5">
    <location>
        <begin position="247"/>
        <end position="253"/>
    </location>
</feature>
<feature type="transmembrane region" description="Helical; Name=Segment S3" evidence="5">
    <location>
        <begin position="254"/>
        <end position="277"/>
    </location>
</feature>
<feature type="topological domain" description="Extracellular" evidence="5">
    <location>
        <begin position="278"/>
        <end position="283"/>
    </location>
</feature>
<feature type="transmembrane region" description="Helical; Voltage-sensor; Name=Segment S4" evidence="5">
    <location>
        <begin position="284"/>
        <end position="306"/>
    </location>
</feature>
<feature type="topological domain" description="Cytoplasmic" evidence="5">
    <location>
        <begin position="307"/>
        <end position="318"/>
    </location>
</feature>
<feature type="transmembrane region" description="Helical; Name=Segment S5" evidence="5">
    <location>
        <begin position="319"/>
        <end position="343"/>
    </location>
</feature>
<feature type="topological domain" description="Extracellular" evidence="5">
    <location>
        <begin position="344"/>
        <end position="352"/>
    </location>
</feature>
<feature type="intramembrane region" description="Helical; Name=Pore helix" evidence="5">
    <location>
        <begin position="353"/>
        <end position="366"/>
    </location>
</feature>
<feature type="intramembrane region" evidence="1">
    <location>
        <begin position="367"/>
        <end position="374"/>
    </location>
</feature>
<feature type="transmembrane region" description="Helical; Name=Segment S6" evidence="5">
    <location>
        <begin position="378"/>
        <end position="400"/>
    </location>
</feature>
<feature type="topological domain" description="Cytoplasmic" evidence="5">
    <location>
        <begin position="401"/>
        <end position="655"/>
    </location>
</feature>
<feature type="region of interest" description="Interaction with KCNIP1 and KCNIP2" evidence="5">
    <location>
        <begin position="6"/>
        <end position="21"/>
    </location>
</feature>
<feature type="region of interest" description="Interaction with KCNIP1" evidence="5">
    <location>
        <begin position="70"/>
        <end position="78"/>
    </location>
</feature>
<feature type="region of interest" description="Interaction with KCNIP1 and KCNIP2" evidence="5">
    <location>
        <begin position="470"/>
        <end position="487"/>
    </location>
</feature>
<feature type="region of interest" description="Mediates dendritic targeting" evidence="3">
    <location>
        <begin position="472"/>
        <end position="487"/>
    </location>
</feature>
<feature type="region of interest" description="Disordered" evidence="8">
    <location>
        <begin position="618"/>
        <end position="644"/>
    </location>
</feature>
<feature type="short sequence motif" description="Selectivity filter" evidence="1">
    <location>
        <begin position="367"/>
        <end position="372"/>
    </location>
</feature>
<feature type="binding site" description="in chain B" evidence="5">
    <location>
        <position position="104"/>
    </location>
    <ligand>
        <name>Zn(2+)</name>
        <dbReference type="ChEBI" id="CHEBI:29105"/>
        <note>ligand shared between homodimeric partners</note>
    </ligand>
</feature>
<feature type="binding site" description="in chain D" evidence="5">
    <location>
        <position position="110"/>
    </location>
    <ligand>
        <name>Zn(2+)</name>
        <dbReference type="ChEBI" id="CHEBI:29105"/>
        <note>ligand shared between homodimeric partners</note>
    </ligand>
</feature>
<feature type="binding site" description="in chain B" evidence="5">
    <location>
        <position position="131"/>
    </location>
    <ligand>
        <name>Zn(2+)</name>
        <dbReference type="ChEBI" id="CHEBI:29105"/>
        <note>ligand shared between homodimeric partners</note>
    </ligand>
</feature>
<feature type="binding site" description="in chain B" evidence="5">
    <location>
        <position position="132"/>
    </location>
    <ligand>
        <name>Zn(2+)</name>
        <dbReference type="ChEBI" id="CHEBI:29105"/>
        <note>ligand shared between homodimeric partners</note>
    </ligand>
</feature>
<feature type="binding site" evidence="4">
    <location>
        <position position="367"/>
    </location>
    <ligand>
        <name>K(+)</name>
        <dbReference type="ChEBI" id="CHEBI:29103"/>
        <note>ligand shared between homotetrameric partners</note>
    </ligand>
</feature>
<feature type="binding site" evidence="4">
    <location>
        <position position="368"/>
    </location>
    <ligand>
        <name>K(+)</name>
        <dbReference type="ChEBI" id="CHEBI:29103"/>
        <note>ligand shared between homotetrameric partners</note>
    </ligand>
</feature>
<feature type="binding site" evidence="4">
    <location>
        <position position="369"/>
    </location>
    <ligand>
        <name>K(+)</name>
        <dbReference type="ChEBI" id="CHEBI:29103"/>
        <note>ligand shared between homotetrameric partners</note>
    </ligand>
</feature>
<feature type="binding site" evidence="4">
    <location>
        <position position="370"/>
    </location>
    <ligand>
        <name>K(+)</name>
        <dbReference type="ChEBI" id="CHEBI:29103"/>
        <note>ligand shared between homotetrameric partners</note>
    </ligand>
</feature>
<feature type="modified residue" description="Phosphoserine" evidence="6">
    <location>
        <position position="153"/>
    </location>
</feature>
<feature type="modified residue" description="Phosphothreonine" evidence="6">
    <location>
        <position position="459"/>
    </location>
</feature>
<feature type="modified residue" description="Phosphoserine; by CaMK2D" evidence="2">
    <location>
        <position position="569"/>
    </location>
</feature>
<feature type="modified residue" description="Phosphoserine" evidence="6">
    <location>
        <position position="585"/>
    </location>
</feature>
<feature type="splice variant" id="VSP_008830" description="In isoform 2." evidence="10">
    <location>
        <begin position="488"/>
        <end position="506"/>
    </location>
</feature>
<comment type="function">
    <text evidence="2 5 9">Pore-forming (alpha) subunit of voltage-gated A-type potassium channels that mediates transmembrane potassium transport in excitable membranes, in brain and heart (PubMed:12122138). In cardiomyocytes, may generate the transient outward potassium current I(To). In neurons, may conduct the transient subthreshold somatodendritic A-type potassium current (ISA) (By similarity). Kinetics properties are characterized by fast activation at subthreshold membrane potentials, rapid inactivation, and quick recovery from inactivation. Channel properties are modulated by interactions with regulatory subunits. Interaction with the regulatory subunits KCNIP1 or KCNIP2 modulates the channel gating kinetics namely channel activation and inactivation kinetics and rate of recovery from inactivation. Likewise, interaction with DPP6 modulates the channel gating kinetics namely channel activation and inactivation kinetics (By similarity).</text>
</comment>
<comment type="catalytic activity">
    <reaction evidence="9">
        <text>K(+)(in) = K(+)(out)</text>
        <dbReference type="Rhea" id="RHEA:29463"/>
        <dbReference type="ChEBI" id="CHEBI:29103"/>
    </reaction>
</comment>
<comment type="subunit">
    <text evidence="2 5 6">Homotetramer (By similarity). Heterotetramer with KCND2 (By similarity). Associates with the regulatory subunits KCNIP3 and KCNIP4 (By similarity). Interacts with KCNE1, KCNE2, SCN1B and KCNAB1 and DLG1 (By similarity). Component of heteromultimeric potassium channels. Identified in potassium channel complexes containing KCND1, KCND2, KCND3, KCNIP1, KCNIP2, KCNIP3, KCNIP4, DPP6 and DPP10 (By similarity). Interacts with KCNIP1; each KCNIP1 monomer interacts with two adjacent KCND3 subunits, through both the N-terminal inactivation ball of a KCND3 subunit and a C-terminal helix from the adjacent KCND3 subunit, clamping them together; this interaction stabilizes the tetrameric form and modulates the channel gating kinetics namely channel activation and inactivation kinetics and rate of recovery from inactivation. Interacts with DPP6; this interaction modulates the channel gating kinetics namely channel activation and inactivation kinetics and rate of recovery from inactivation. Interacts with KCNIP2; each KCNIP2 monomer interacts with two adjacent KCND3 subunits, through both the N-terminal inactivation ball of a KCND3 subunit and a C-terminal helix from the adjacent KCND3 subunit, clamping them together; this interaction modulates the channel gating kinetics (By similarity).</text>
</comment>
<comment type="subcellular location">
    <subcellularLocation>
        <location evidence="2">Cell membrane</location>
        <topology evidence="7">Multi-pass membrane protein</topology>
    </subcellularLocation>
    <subcellularLocation>
        <location evidence="2">Cell membrane</location>
        <location evidence="2">Sarcolemma</location>
        <topology evidence="7">Multi-pass membrane protein</topology>
    </subcellularLocation>
    <subcellularLocation>
        <location evidence="2">Cell projection</location>
        <location evidence="2">Dendrite</location>
    </subcellularLocation>
    <text evidence="2">Interaction with palmitoylated KCNIP2 and KCNIP3 enhances cell surface expression.</text>
</comment>
<comment type="alternative products">
    <event type="alternative splicing"/>
    <isoform>
        <id>Q9TTT5-1</id>
        <name>1</name>
        <name>Long</name>
        <sequence type="displayed"/>
    </isoform>
    <isoform>
        <id>Q9TTT5-2</id>
        <name>2</name>
        <name>Short</name>
        <sequence type="described" ref="VSP_008830"/>
    </isoform>
</comment>
<comment type="tissue specificity">
    <text evidence="9">Detected in carotid body chemoreceptor cells and in frontal cortex.</text>
</comment>
<comment type="domain">
    <text evidence="5">Two N-terminal domains regulate binding to and modulation by KCNIP1.</text>
</comment>
<comment type="PTM">
    <text evidence="2">Regulated through phosphorylation at Ser-569 by CaMK2D.</text>
</comment>
<comment type="similarity">
    <text evidence="11">Belongs to the potassium channel family. D (Shal) (TC 1.A.1.2) subfamily. Kv4.3/KCND3 sub-subfamily.</text>
</comment>
<accession>Q9TTT5</accession>